<comment type="function">
    <text evidence="1">Lytic transglycosylase with a strong preference for naked glycan strands that lack stem peptides.</text>
</comment>
<comment type="subcellular location">
    <subcellularLocation>
        <location evidence="1">Cell membrane</location>
        <topology evidence="1">Lipid-anchor</topology>
    </subcellularLocation>
</comment>
<comment type="similarity">
    <text evidence="1">Belongs to the RlpA family.</text>
</comment>
<proteinExistence type="inferred from homology"/>
<accession>Q8ZR01</accession>
<gene>
    <name evidence="1" type="primary">rlpA</name>
    <name type="ordered locus">STM0638</name>
</gene>
<evidence type="ECO:0000255" key="1">
    <source>
        <dbReference type="HAMAP-Rule" id="MF_02071"/>
    </source>
</evidence>
<evidence type="ECO:0000256" key="2">
    <source>
        <dbReference type="SAM" id="MobiDB-lite"/>
    </source>
</evidence>
<keyword id="KW-1003">Cell membrane</keyword>
<keyword id="KW-0961">Cell wall biogenesis/degradation</keyword>
<keyword id="KW-0449">Lipoprotein</keyword>
<keyword id="KW-0456">Lyase</keyword>
<keyword id="KW-0472">Membrane</keyword>
<keyword id="KW-0564">Palmitate</keyword>
<keyword id="KW-1185">Reference proteome</keyword>
<keyword id="KW-0732">Signal</keyword>
<protein>
    <recommendedName>
        <fullName evidence="1">Endolytic peptidoglycan transglycosylase RlpA</fullName>
        <ecNumber evidence="1">4.2.2.-</ecNumber>
    </recommendedName>
    <alternativeName>
        <fullName>Rare lipoprotein A</fullName>
    </alternativeName>
</protein>
<name>RLPA_SALTY</name>
<reference key="1">
    <citation type="journal article" date="2001" name="Nature">
        <title>Complete genome sequence of Salmonella enterica serovar Typhimurium LT2.</title>
        <authorList>
            <person name="McClelland M."/>
            <person name="Sanderson K.E."/>
            <person name="Spieth J."/>
            <person name="Clifton S.W."/>
            <person name="Latreille P."/>
            <person name="Courtney L."/>
            <person name="Porwollik S."/>
            <person name="Ali J."/>
            <person name="Dante M."/>
            <person name="Du F."/>
            <person name="Hou S."/>
            <person name="Layman D."/>
            <person name="Leonard S."/>
            <person name="Nguyen C."/>
            <person name="Scott K."/>
            <person name="Holmes A."/>
            <person name="Grewal N."/>
            <person name="Mulvaney E."/>
            <person name="Ryan E."/>
            <person name="Sun H."/>
            <person name="Florea L."/>
            <person name="Miller W."/>
            <person name="Stoneking T."/>
            <person name="Nhan M."/>
            <person name="Waterston R."/>
            <person name="Wilson R.K."/>
        </authorList>
    </citation>
    <scope>NUCLEOTIDE SEQUENCE [LARGE SCALE GENOMIC DNA]</scope>
    <source>
        <strain>LT2 / SGSC1412 / ATCC 700720</strain>
    </source>
</reference>
<sequence length="381" mass="39108">MRKQLPVICVAAGIVLLAACTNDGGQQQTTVAPQPAVCNGPTVEISGAEPRYEPLNPTANQDYQRDGKSYKIVQDPSRFSQAGLAAIYDAEPGSNLTASGEMFDPMQLTAAHPTLPIPSYARITNLANGRMIVVRINDRGPYGTDRVISLSRAAADRLNTSNNTKVRIDPIIVAPDGSLSGPGMACTTVAKQTYALPPRPDLSGGMGSASSAPAQPQGDVLPVSNSTLKSDDTTGAPVSSSGFLGAPTTLAPGVLESNEPTPAPQPAPVSAPVAAPATAPATATPVSAPAAAAPVSAPVSAPAAAASGRFVVQVGAVSDQTRAQQYQQRLSQQFSVPGRVIQNGAVWRIQLGPFASKAEASALQQRLQTEAQLQSFIASAQ</sequence>
<feature type="signal peptide" evidence="1">
    <location>
        <begin position="1"/>
        <end position="19"/>
    </location>
</feature>
<feature type="chain" id="PRO_0000030799" description="Endolytic peptidoglycan transglycosylase RlpA" evidence="1">
    <location>
        <begin position="20"/>
        <end position="381"/>
    </location>
</feature>
<feature type="domain" description="SPOR" evidence="1">
    <location>
        <begin position="304"/>
        <end position="380"/>
    </location>
</feature>
<feature type="region of interest" description="Disordered" evidence="2">
    <location>
        <begin position="196"/>
        <end position="274"/>
    </location>
</feature>
<feature type="compositionally biased region" description="Low complexity" evidence="2">
    <location>
        <begin position="208"/>
        <end position="218"/>
    </location>
</feature>
<feature type="lipid moiety-binding region" description="N-palmitoyl cysteine" evidence="1">
    <location>
        <position position="20"/>
    </location>
</feature>
<feature type="lipid moiety-binding region" description="S-diacylglycerol cysteine" evidence="1">
    <location>
        <position position="20"/>
    </location>
</feature>
<organism>
    <name type="scientific">Salmonella typhimurium (strain LT2 / SGSC1412 / ATCC 700720)</name>
    <dbReference type="NCBI Taxonomy" id="99287"/>
    <lineage>
        <taxon>Bacteria</taxon>
        <taxon>Pseudomonadati</taxon>
        <taxon>Pseudomonadota</taxon>
        <taxon>Gammaproteobacteria</taxon>
        <taxon>Enterobacterales</taxon>
        <taxon>Enterobacteriaceae</taxon>
        <taxon>Salmonella</taxon>
    </lineage>
</organism>
<dbReference type="EC" id="4.2.2.-" evidence="1"/>
<dbReference type="EMBL" id="AE006468">
    <property type="protein sequence ID" value="AAL19589.1"/>
    <property type="molecule type" value="Genomic_DNA"/>
</dbReference>
<dbReference type="RefSeq" id="NP_459630.1">
    <property type="nucleotide sequence ID" value="NC_003197.2"/>
</dbReference>
<dbReference type="RefSeq" id="WP_001231300.1">
    <property type="nucleotide sequence ID" value="NC_003197.2"/>
</dbReference>
<dbReference type="SMR" id="Q8ZR01"/>
<dbReference type="STRING" id="99287.STM0638"/>
<dbReference type="PaxDb" id="99287-STM0638"/>
<dbReference type="GeneID" id="1252158"/>
<dbReference type="KEGG" id="stm:STM0638"/>
<dbReference type="PATRIC" id="fig|99287.12.peg.673"/>
<dbReference type="HOGENOM" id="CLU_042923_3_0_6"/>
<dbReference type="OMA" id="PFYSDRI"/>
<dbReference type="PhylomeDB" id="Q8ZR01"/>
<dbReference type="BioCyc" id="SENT99287:STM0638-MONOMER"/>
<dbReference type="Proteomes" id="UP000001014">
    <property type="component" value="Chromosome"/>
</dbReference>
<dbReference type="GO" id="GO:0009279">
    <property type="term" value="C:cell outer membrane"/>
    <property type="evidence" value="ECO:0000318"/>
    <property type="project" value="GO_Central"/>
</dbReference>
<dbReference type="GO" id="GO:0005886">
    <property type="term" value="C:plasma membrane"/>
    <property type="evidence" value="ECO:0007669"/>
    <property type="project" value="UniProtKB-SubCell"/>
</dbReference>
<dbReference type="GO" id="GO:0008932">
    <property type="term" value="F:lytic endotransglycosylase activity"/>
    <property type="evidence" value="ECO:0007669"/>
    <property type="project" value="UniProtKB-UniRule"/>
</dbReference>
<dbReference type="GO" id="GO:0042834">
    <property type="term" value="F:peptidoglycan binding"/>
    <property type="evidence" value="ECO:0007669"/>
    <property type="project" value="InterPro"/>
</dbReference>
<dbReference type="GO" id="GO:0071555">
    <property type="term" value="P:cell wall organization"/>
    <property type="evidence" value="ECO:0007669"/>
    <property type="project" value="UniProtKB-KW"/>
</dbReference>
<dbReference type="GO" id="GO:0000270">
    <property type="term" value="P:peptidoglycan metabolic process"/>
    <property type="evidence" value="ECO:0007669"/>
    <property type="project" value="UniProtKB-UniRule"/>
</dbReference>
<dbReference type="CDD" id="cd22268">
    <property type="entry name" value="DPBB_RlpA-like"/>
    <property type="match status" value="1"/>
</dbReference>
<dbReference type="FunFam" id="2.40.40.10:FF:000003">
    <property type="entry name" value="Endolytic peptidoglycan transglycosylase RlpA"/>
    <property type="match status" value="1"/>
</dbReference>
<dbReference type="FunFam" id="3.30.70.1070:FF:000003">
    <property type="entry name" value="Endolytic peptidoglycan transglycosylase RlpA"/>
    <property type="match status" value="1"/>
</dbReference>
<dbReference type="Gene3D" id="2.40.40.10">
    <property type="entry name" value="RlpA-like domain"/>
    <property type="match status" value="1"/>
</dbReference>
<dbReference type="Gene3D" id="3.30.70.1070">
    <property type="entry name" value="Sporulation related repeat"/>
    <property type="match status" value="1"/>
</dbReference>
<dbReference type="HAMAP" id="MF_02071">
    <property type="entry name" value="RlpA"/>
    <property type="match status" value="1"/>
</dbReference>
<dbReference type="InterPro" id="IPR034718">
    <property type="entry name" value="RlpA"/>
</dbReference>
<dbReference type="InterPro" id="IPR009009">
    <property type="entry name" value="RlpA-like_DPBB"/>
</dbReference>
<dbReference type="InterPro" id="IPR036908">
    <property type="entry name" value="RlpA-like_sf"/>
</dbReference>
<dbReference type="InterPro" id="IPR012997">
    <property type="entry name" value="RplA"/>
</dbReference>
<dbReference type="InterPro" id="IPR007730">
    <property type="entry name" value="SPOR-like_dom"/>
</dbReference>
<dbReference type="InterPro" id="IPR036680">
    <property type="entry name" value="SPOR-like_sf"/>
</dbReference>
<dbReference type="NCBIfam" id="NF007953">
    <property type="entry name" value="PRK10672.1"/>
    <property type="match status" value="1"/>
</dbReference>
<dbReference type="NCBIfam" id="TIGR00413">
    <property type="entry name" value="rlpA"/>
    <property type="match status" value="1"/>
</dbReference>
<dbReference type="PANTHER" id="PTHR34183">
    <property type="entry name" value="ENDOLYTIC PEPTIDOGLYCAN TRANSGLYCOSYLASE RLPA"/>
    <property type="match status" value="1"/>
</dbReference>
<dbReference type="PANTHER" id="PTHR34183:SF1">
    <property type="entry name" value="ENDOLYTIC PEPTIDOGLYCAN TRANSGLYCOSYLASE RLPA"/>
    <property type="match status" value="1"/>
</dbReference>
<dbReference type="Pfam" id="PF03330">
    <property type="entry name" value="DPBB_1"/>
    <property type="match status" value="1"/>
</dbReference>
<dbReference type="Pfam" id="PF05036">
    <property type="entry name" value="SPOR"/>
    <property type="match status" value="1"/>
</dbReference>
<dbReference type="SUPFAM" id="SSF50685">
    <property type="entry name" value="Barwin-like endoglucanases"/>
    <property type="match status" value="1"/>
</dbReference>
<dbReference type="SUPFAM" id="SSF110997">
    <property type="entry name" value="Sporulation related repeat"/>
    <property type="match status" value="1"/>
</dbReference>
<dbReference type="PROSITE" id="PS51257">
    <property type="entry name" value="PROKAR_LIPOPROTEIN"/>
    <property type="match status" value="1"/>
</dbReference>
<dbReference type="PROSITE" id="PS51724">
    <property type="entry name" value="SPOR"/>
    <property type="match status" value="1"/>
</dbReference>